<accession>Q6HHF8</accession>
<sequence length="429" mass="45156">MKERTIQPVNNGLNGNITIPGDKSISHRAVMFGAIAEGTTTIKGFLPGADCLSTISCFKEMGVDIVQDGDEVTVVGKGLEGLQEPKAVLDVGNSGTTIRLMSGILANTPFFSCVQGDASIAKRPMKRVTNPLKQMGANIDGREEGTFTPLTVRGGDLKAIEYTSPVASAQVKSAILLAGLRAEGVTAVTEPHISRDHTERMLEAFGVKVTREGKTVKLAGGQKLTATDVQVPGDVSSAAFFLVAGAIIPNSKLVLENVGMNPTRTGIIDVLEKMGATFTVEPINEGASEPAANITIETSSLKGIEIGGDIIPRLIDEIPVIALAATQAEGITVIKDAHELKVKETNRIDTVVAELTKLGARIEATDDGMIIYGKSALKGNTVNSYGDHRIGMMLAIAGCIAEGKTIIEDAEAVGVSYPTFFEELQKLAK</sequence>
<proteinExistence type="inferred from homology"/>
<name>AROA_BACHK</name>
<keyword id="KW-0028">Amino-acid biosynthesis</keyword>
<keyword id="KW-0057">Aromatic amino acid biosynthesis</keyword>
<keyword id="KW-0963">Cytoplasm</keyword>
<keyword id="KW-0808">Transferase</keyword>
<feature type="chain" id="PRO_0000088224" description="3-phosphoshikimate 1-carboxyvinyltransferase">
    <location>
        <begin position="1"/>
        <end position="429"/>
    </location>
</feature>
<feature type="active site" description="Proton acceptor" evidence="1">
    <location>
        <position position="316"/>
    </location>
</feature>
<feature type="binding site" evidence="1">
    <location>
        <position position="23"/>
    </location>
    <ligand>
        <name>3-phosphoshikimate</name>
        <dbReference type="ChEBI" id="CHEBI:145989"/>
    </ligand>
</feature>
<feature type="binding site" evidence="1">
    <location>
        <position position="23"/>
    </location>
    <ligand>
        <name>phosphoenolpyruvate</name>
        <dbReference type="ChEBI" id="CHEBI:58702"/>
    </ligand>
</feature>
<feature type="binding site" evidence="1">
    <location>
        <position position="24"/>
    </location>
    <ligand>
        <name>3-phosphoshikimate</name>
        <dbReference type="ChEBI" id="CHEBI:145989"/>
    </ligand>
</feature>
<feature type="binding site" evidence="1">
    <location>
        <position position="28"/>
    </location>
    <ligand>
        <name>3-phosphoshikimate</name>
        <dbReference type="ChEBI" id="CHEBI:145989"/>
    </ligand>
</feature>
<feature type="binding site" evidence="1">
    <location>
        <position position="95"/>
    </location>
    <ligand>
        <name>phosphoenolpyruvate</name>
        <dbReference type="ChEBI" id="CHEBI:58702"/>
    </ligand>
</feature>
<feature type="binding site" evidence="1">
    <location>
        <position position="123"/>
    </location>
    <ligand>
        <name>phosphoenolpyruvate</name>
        <dbReference type="ChEBI" id="CHEBI:58702"/>
    </ligand>
</feature>
<feature type="binding site" evidence="1">
    <location>
        <position position="168"/>
    </location>
    <ligand>
        <name>3-phosphoshikimate</name>
        <dbReference type="ChEBI" id="CHEBI:145989"/>
    </ligand>
</feature>
<feature type="binding site" evidence="1">
    <location>
        <position position="170"/>
    </location>
    <ligand>
        <name>3-phosphoshikimate</name>
        <dbReference type="ChEBI" id="CHEBI:145989"/>
    </ligand>
</feature>
<feature type="binding site" evidence="1">
    <location>
        <position position="170"/>
    </location>
    <ligand>
        <name>phosphoenolpyruvate</name>
        <dbReference type="ChEBI" id="CHEBI:58702"/>
    </ligand>
</feature>
<feature type="binding site" evidence="1">
    <location>
        <position position="316"/>
    </location>
    <ligand>
        <name>3-phosphoshikimate</name>
        <dbReference type="ChEBI" id="CHEBI:145989"/>
    </ligand>
</feature>
<feature type="binding site" evidence="1">
    <location>
        <position position="343"/>
    </location>
    <ligand>
        <name>3-phosphoshikimate</name>
        <dbReference type="ChEBI" id="CHEBI:145989"/>
    </ligand>
</feature>
<feature type="binding site" evidence="1">
    <location>
        <position position="347"/>
    </location>
    <ligand>
        <name>phosphoenolpyruvate</name>
        <dbReference type="ChEBI" id="CHEBI:58702"/>
    </ligand>
</feature>
<feature type="binding site" evidence="1">
    <location>
        <position position="389"/>
    </location>
    <ligand>
        <name>phosphoenolpyruvate</name>
        <dbReference type="ChEBI" id="CHEBI:58702"/>
    </ligand>
</feature>
<dbReference type="EC" id="2.5.1.19" evidence="1"/>
<dbReference type="EMBL" id="AE017355">
    <property type="protein sequence ID" value="AAT61256.1"/>
    <property type="molecule type" value="Genomic_DNA"/>
</dbReference>
<dbReference type="RefSeq" id="WP_000664618.1">
    <property type="nucleotide sequence ID" value="NC_005957.1"/>
</dbReference>
<dbReference type="RefSeq" id="YP_037018.1">
    <property type="nucleotide sequence ID" value="NC_005957.1"/>
</dbReference>
<dbReference type="SMR" id="Q6HHF8"/>
<dbReference type="KEGG" id="btk:BT9727_2694"/>
<dbReference type="PATRIC" id="fig|281309.8.peg.2860"/>
<dbReference type="HOGENOM" id="CLU_024321_0_1_9"/>
<dbReference type="UniPathway" id="UPA00053">
    <property type="reaction ID" value="UER00089"/>
</dbReference>
<dbReference type="Proteomes" id="UP000001301">
    <property type="component" value="Chromosome"/>
</dbReference>
<dbReference type="GO" id="GO:0005737">
    <property type="term" value="C:cytoplasm"/>
    <property type="evidence" value="ECO:0007669"/>
    <property type="project" value="UniProtKB-SubCell"/>
</dbReference>
<dbReference type="GO" id="GO:0003866">
    <property type="term" value="F:3-phosphoshikimate 1-carboxyvinyltransferase activity"/>
    <property type="evidence" value="ECO:0007669"/>
    <property type="project" value="UniProtKB-UniRule"/>
</dbReference>
<dbReference type="GO" id="GO:0008652">
    <property type="term" value="P:amino acid biosynthetic process"/>
    <property type="evidence" value="ECO:0007669"/>
    <property type="project" value="UniProtKB-KW"/>
</dbReference>
<dbReference type="GO" id="GO:0009073">
    <property type="term" value="P:aromatic amino acid family biosynthetic process"/>
    <property type="evidence" value="ECO:0007669"/>
    <property type="project" value="UniProtKB-KW"/>
</dbReference>
<dbReference type="GO" id="GO:0009423">
    <property type="term" value="P:chorismate biosynthetic process"/>
    <property type="evidence" value="ECO:0007669"/>
    <property type="project" value="UniProtKB-UniRule"/>
</dbReference>
<dbReference type="CDD" id="cd01556">
    <property type="entry name" value="EPSP_synthase"/>
    <property type="match status" value="1"/>
</dbReference>
<dbReference type="FunFam" id="3.65.10.10:FF:000005">
    <property type="entry name" value="3-phosphoshikimate 1-carboxyvinyltransferase"/>
    <property type="match status" value="1"/>
</dbReference>
<dbReference type="Gene3D" id="3.65.10.10">
    <property type="entry name" value="Enolpyruvate transferase domain"/>
    <property type="match status" value="2"/>
</dbReference>
<dbReference type="HAMAP" id="MF_00210">
    <property type="entry name" value="EPSP_synth"/>
    <property type="match status" value="1"/>
</dbReference>
<dbReference type="InterPro" id="IPR001986">
    <property type="entry name" value="Enolpyruvate_Tfrase_dom"/>
</dbReference>
<dbReference type="InterPro" id="IPR036968">
    <property type="entry name" value="Enolpyruvate_Tfrase_sf"/>
</dbReference>
<dbReference type="InterPro" id="IPR006264">
    <property type="entry name" value="EPSP_synthase"/>
</dbReference>
<dbReference type="InterPro" id="IPR023193">
    <property type="entry name" value="EPSP_synthase_CS"/>
</dbReference>
<dbReference type="InterPro" id="IPR013792">
    <property type="entry name" value="RNA3'P_cycl/enolpyr_Trfase_a/b"/>
</dbReference>
<dbReference type="NCBIfam" id="TIGR01356">
    <property type="entry name" value="aroA"/>
    <property type="match status" value="1"/>
</dbReference>
<dbReference type="PANTHER" id="PTHR21090">
    <property type="entry name" value="AROM/DEHYDROQUINATE SYNTHASE"/>
    <property type="match status" value="1"/>
</dbReference>
<dbReference type="PANTHER" id="PTHR21090:SF5">
    <property type="entry name" value="PENTAFUNCTIONAL AROM POLYPEPTIDE"/>
    <property type="match status" value="1"/>
</dbReference>
<dbReference type="Pfam" id="PF00275">
    <property type="entry name" value="EPSP_synthase"/>
    <property type="match status" value="1"/>
</dbReference>
<dbReference type="PIRSF" id="PIRSF000505">
    <property type="entry name" value="EPSPS"/>
    <property type="match status" value="1"/>
</dbReference>
<dbReference type="SUPFAM" id="SSF55205">
    <property type="entry name" value="EPT/RTPC-like"/>
    <property type="match status" value="1"/>
</dbReference>
<dbReference type="PROSITE" id="PS00104">
    <property type="entry name" value="EPSP_SYNTHASE_1"/>
    <property type="match status" value="1"/>
</dbReference>
<dbReference type="PROSITE" id="PS00885">
    <property type="entry name" value="EPSP_SYNTHASE_2"/>
    <property type="match status" value="1"/>
</dbReference>
<protein>
    <recommendedName>
        <fullName evidence="1">3-phosphoshikimate 1-carboxyvinyltransferase</fullName>
        <ecNumber evidence="1">2.5.1.19</ecNumber>
    </recommendedName>
    <alternativeName>
        <fullName evidence="1">5-enolpyruvylshikimate-3-phosphate synthase</fullName>
        <shortName evidence="1">EPSP synthase</shortName>
        <shortName evidence="1">EPSPS</shortName>
    </alternativeName>
</protein>
<reference key="1">
    <citation type="journal article" date="2006" name="J. Bacteriol.">
        <title>Pathogenomic sequence analysis of Bacillus cereus and Bacillus thuringiensis isolates closely related to Bacillus anthracis.</title>
        <authorList>
            <person name="Han C.S."/>
            <person name="Xie G."/>
            <person name="Challacombe J.F."/>
            <person name="Altherr M.R."/>
            <person name="Bhotika S.S."/>
            <person name="Bruce D."/>
            <person name="Campbell C.S."/>
            <person name="Campbell M.L."/>
            <person name="Chen J."/>
            <person name="Chertkov O."/>
            <person name="Cleland C."/>
            <person name="Dimitrijevic M."/>
            <person name="Doggett N.A."/>
            <person name="Fawcett J.J."/>
            <person name="Glavina T."/>
            <person name="Goodwin L.A."/>
            <person name="Hill K.K."/>
            <person name="Hitchcock P."/>
            <person name="Jackson P.J."/>
            <person name="Keim P."/>
            <person name="Kewalramani A.R."/>
            <person name="Longmire J."/>
            <person name="Lucas S."/>
            <person name="Malfatti S."/>
            <person name="McMurry K."/>
            <person name="Meincke L.J."/>
            <person name="Misra M."/>
            <person name="Moseman B.L."/>
            <person name="Mundt M."/>
            <person name="Munk A.C."/>
            <person name="Okinaka R.T."/>
            <person name="Parson-Quintana B."/>
            <person name="Reilly L.P."/>
            <person name="Richardson P."/>
            <person name="Robinson D.L."/>
            <person name="Rubin E."/>
            <person name="Saunders E."/>
            <person name="Tapia R."/>
            <person name="Tesmer J.G."/>
            <person name="Thayer N."/>
            <person name="Thompson L.S."/>
            <person name="Tice H."/>
            <person name="Ticknor L.O."/>
            <person name="Wills P.L."/>
            <person name="Brettin T.S."/>
            <person name="Gilna P."/>
        </authorList>
    </citation>
    <scope>NUCLEOTIDE SEQUENCE [LARGE SCALE GENOMIC DNA]</scope>
    <source>
        <strain>97-27</strain>
    </source>
</reference>
<comment type="function">
    <text evidence="1">Catalyzes the transfer of the enolpyruvyl moiety of phosphoenolpyruvate (PEP) to the 5-hydroxyl of shikimate-3-phosphate (S3P) to produce enolpyruvyl shikimate-3-phosphate and inorganic phosphate.</text>
</comment>
<comment type="catalytic activity">
    <reaction evidence="1">
        <text>3-phosphoshikimate + phosphoenolpyruvate = 5-O-(1-carboxyvinyl)-3-phosphoshikimate + phosphate</text>
        <dbReference type="Rhea" id="RHEA:21256"/>
        <dbReference type="ChEBI" id="CHEBI:43474"/>
        <dbReference type="ChEBI" id="CHEBI:57701"/>
        <dbReference type="ChEBI" id="CHEBI:58702"/>
        <dbReference type="ChEBI" id="CHEBI:145989"/>
        <dbReference type="EC" id="2.5.1.19"/>
    </reaction>
    <physiologicalReaction direction="left-to-right" evidence="1">
        <dbReference type="Rhea" id="RHEA:21257"/>
    </physiologicalReaction>
</comment>
<comment type="pathway">
    <text evidence="1">Metabolic intermediate biosynthesis; chorismate biosynthesis; chorismate from D-erythrose 4-phosphate and phosphoenolpyruvate: step 6/7.</text>
</comment>
<comment type="subunit">
    <text evidence="1">Monomer.</text>
</comment>
<comment type="subcellular location">
    <subcellularLocation>
        <location evidence="1">Cytoplasm</location>
    </subcellularLocation>
</comment>
<comment type="similarity">
    <text evidence="1">Belongs to the EPSP synthase family.</text>
</comment>
<organism>
    <name type="scientific">Bacillus thuringiensis subsp. konkukian (strain 97-27)</name>
    <dbReference type="NCBI Taxonomy" id="281309"/>
    <lineage>
        <taxon>Bacteria</taxon>
        <taxon>Bacillati</taxon>
        <taxon>Bacillota</taxon>
        <taxon>Bacilli</taxon>
        <taxon>Bacillales</taxon>
        <taxon>Bacillaceae</taxon>
        <taxon>Bacillus</taxon>
        <taxon>Bacillus cereus group</taxon>
    </lineage>
</organism>
<evidence type="ECO:0000255" key="1">
    <source>
        <dbReference type="HAMAP-Rule" id="MF_00210"/>
    </source>
</evidence>
<gene>
    <name evidence="1" type="primary">aroA</name>
    <name type="ordered locus">BT9727_2694</name>
</gene>